<organism>
    <name type="scientific">Desulfotalea psychrophila (strain LSv54 / DSM 12343)</name>
    <dbReference type="NCBI Taxonomy" id="177439"/>
    <lineage>
        <taxon>Bacteria</taxon>
        <taxon>Pseudomonadati</taxon>
        <taxon>Thermodesulfobacteriota</taxon>
        <taxon>Desulfobulbia</taxon>
        <taxon>Desulfobulbales</taxon>
        <taxon>Desulfocapsaceae</taxon>
        <taxon>Desulfotalea</taxon>
    </lineage>
</organism>
<proteinExistence type="inferred from homology"/>
<feature type="chain" id="PRO_0000117093" description="tRNA uridine 5-carboxymethylaminomethyl modification enzyme MnmG">
    <location>
        <begin position="1"/>
        <end position="647"/>
    </location>
</feature>
<feature type="binding site" evidence="1">
    <location>
        <begin position="22"/>
        <end position="27"/>
    </location>
    <ligand>
        <name>FAD</name>
        <dbReference type="ChEBI" id="CHEBI:57692"/>
    </ligand>
</feature>
<feature type="binding site" evidence="1">
    <location>
        <position position="134"/>
    </location>
    <ligand>
        <name>FAD</name>
        <dbReference type="ChEBI" id="CHEBI:57692"/>
    </ligand>
</feature>
<feature type="binding site" evidence="1">
    <location>
        <position position="189"/>
    </location>
    <ligand>
        <name>FAD</name>
        <dbReference type="ChEBI" id="CHEBI:57692"/>
    </ligand>
</feature>
<feature type="binding site" evidence="1">
    <location>
        <begin position="283"/>
        <end position="297"/>
    </location>
    <ligand>
        <name>NAD(+)</name>
        <dbReference type="ChEBI" id="CHEBI:57540"/>
    </ligand>
</feature>
<feature type="binding site" evidence="1">
    <location>
        <position position="380"/>
    </location>
    <ligand>
        <name>FAD</name>
        <dbReference type="ChEBI" id="CHEBI:57692"/>
    </ligand>
</feature>
<protein>
    <recommendedName>
        <fullName evidence="1">tRNA uridine 5-carboxymethylaminomethyl modification enzyme MnmG</fullName>
    </recommendedName>
    <alternativeName>
        <fullName evidence="1">Glucose-inhibited division protein A</fullName>
    </alternativeName>
</protein>
<keyword id="KW-0963">Cytoplasm</keyword>
<keyword id="KW-0274">FAD</keyword>
<keyword id="KW-0285">Flavoprotein</keyword>
<keyword id="KW-0520">NAD</keyword>
<keyword id="KW-1185">Reference proteome</keyword>
<keyword id="KW-0819">tRNA processing</keyword>
<sequence length="647" mass="71097">MTYEIHPLPIILMSDFDIVVIGAGHAGCEAALAAARLGHKTLLAVMNVDTIGAMSCNPAIGGLAKGHLVREIDALGGEMARVIDATSIQFRRLNTSKGPAVQSSRAQADRLLYRLQMKSVIEHQENLTVSQTEVNGFIVEDGKITGVTTTIDEKISVKAAIVATGTFLNGLVHIGLKNFPAGRLGDGPSTGLADWFYDNGFAVGRMKTGTVPRIDSLTIDYSELEAQESDMPPAHFSFDSQGKGYTLPQLPCYITYTNEKTHEIIRKGIDQSPLYAGIIQGIGARYCPSIEDKIMRFPEKDRHQVFLEPEGLDTVEVYPNGLPTSLPLEVQIEMLQSIKGLENARIIRPGYAIEYDYIDPLGLRPSLATKKIENLYLAGQINGTSGYEEAAAQGLMAGINATRYLEEREPLILDRSQAYIGVLIDDLVTCGTKEPYRLFTSRAEYRLLLREDNADSRLCQIGKDIGLLDEDKHQRYLIKQAAIDAGCATLDAISIKPTAEVNRILNDAASADLKQKSALSSLLRRPEINITFLQKLPLTAGDKEAVIALANSAVCQEVQVRIKFKGYLQRQEEQVQRFKRMETLKLPEDLNYAQLSGLSNEVVEKLSTIRPISLGQASRISGITPAAVSVLQVHLRKLNYLKSNDKI</sequence>
<gene>
    <name evidence="1" type="primary">mnmG</name>
    <name evidence="1" type="synonym">gidA</name>
    <name type="ordered locus">DP0852</name>
</gene>
<reference key="1">
    <citation type="journal article" date="2004" name="Environ. Microbiol.">
        <title>The genome of Desulfotalea psychrophila, a sulfate-reducing bacterium from permanently cold Arctic sediments.</title>
        <authorList>
            <person name="Rabus R."/>
            <person name="Ruepp A."/>
            <person name="Frickey T."/>
            <person name="Rattei T."/>
            <person name="Fartmann B."/>
            <person name="Stark M."/>
            <person name="Bauer M."/>
            <person name="Zibat A."/>
            <person name="Lombardot T."/>
            <person name="Becker I."/>
            <person name="Amann J."/>
            <person name="Gellner K."/>
            <person name="Teeling H."/>
            <person name="Leuschner W.D."/>
            <person name="Gloeckner F.-O."/>
            <person name="Lupas A.N."/>
            <person name="Amann R."/>
            <person name="Klenk H.-P."/>
        </authorList>
    </citation>
    <scope>NUCLEOTIDE SEQUENCE [LARGE SCALE GENOMIC DNA]</scope>
    <source>
        <strain>DSM 12343 / LSv54</strain>
    </source>
</reference>
<evidence type="ECO:0000255" key="1">
    <source>
        <dbReference type="HAMAP-Rule" id="MF_00129"/>
    </source>
</evidence>
<dbReference type="EMBL" id="CR522870">
    <property type="protein sequence ID" value="CAG35581.1"/>
    <property type="molecule type" value="Genomic_DNA"/>
</dbReference>
<dbReference type="SMR" id="Q6APZ2"/>
<dbReference type="STRING" id="177439.DP0852"/>
<dbReference type="KEGG" id="dps:DP0852"/>
<dbReference type="eggNOG" id="COG0445">
    <property type="taxonomic scope" value="Bacteria"/>
</dbReference>
<dbReference type="HOGENOM" id="CLU_007831_2_2_7"/>
<dbReference type="OrthoDB" id="9815560at2"/>
<dbReference type="Proteomes" id="UP000000602">
    <property type="component" value="Chromosome"/>
</dbReference>
<dbReference type="GO" id="GO:0005829">
    <property type="term" value="C:cytosol"/>
    <property type="evidence" value="ECO:0007669"/>
    <property type="project" value="TreeGrafter"/>
</dbReference>
<dbReference type="GO" id="GO:0050660">
    <property type="term" value="F:flavin adenine dinucleotide binding"/>
    <property type="evidence" value="ECO:0007669"/>
    <property type="project" value="UniProtKB-UniRule"/>
</dbReference>
<dbReference type="GO" id="GO:0030488">
    <property type="term" value="P:tRNA methylation"/>
    <property type="evidence" value="ECO:0007669"/>
    <property type="project" value="TreeGrafter"/>
</dbReference>
<dbReference type="GO" id="GO:0002098">
    <property type="term" value="P:tRNA wobble uridine modification"/>
    <property type="evidence" value="ECO:0007669"/>
    <property type="project" value="InterPro"/>
</dbReference>
<dbReference type="FunFam" id="1.10.150.570:FF:000001">
    <property type="entry name" value="tRNA uridine 5-carboxymethylaminomethyl modification enzyme MnmG"/>
    <property type="match status" value="1"/>
</dbReference>
<dbReference type="FunFam" id="3.50.50.60:FF:000002">
    <property type="entry name" value="tRNA uridine 5-carboxymethylaminomethyl modification enzyme MnmG"/>
    <property type="match status" value="1"/>
</dbReference>
<dbReference type="Gene3D" id="3.50.50.60">
    <property type="entry name" value="FAD/NAD(P)-binding domain"/>
    <property type="match status" value="2"/>
</dbReference>
<dbReference type="Gene3D" id="1.10.150.570">
    <property type="entry name" value="GidA associated domain, C-terminal subdomain"/>
    <property type="match status" value="1"/>
</dbReference>
<dbReference type="Gene3D" id="1.10.10.1800">
    <property type="entry name" value="tRNA uridine 5-carboxymethylaminomethyl modification enzyme MnmG/GidA"/>
    <property type="match status" value="1"/>
</dbReference>
<dbReference type="HAMAP" id="MF_00129">
    <property type="entry name" value="MnmG_GidA"/>
    <property type="match status" value="1"/>
</dbReference>
<dbReference type="InterPro" id="IPR036188">
    <property type="entry name" value="FAD/NAD-bd_sf"/>
</dbReference>
<dbReference type="InterPro" id="IPR049312">
    <property type="entry name" value="GIDA_C_N"/>
</dbReference>
<dbReference type="InterPro" id="IPR004416">
    <property type="entry name" value="MnmG"/>
</dbReference>
<dbReference type="InterPro" id="IPR002218">
    <property type="entry name" value="MnmG-rel"/>
</dbReference>
<dbReference type="InterPro" id="IPR020595">
    <property type="entry name" value="MnmG-rel_CS"/>
</dbReference>
<dbReference type="InterPro" id="IPR026904">
    <property type="entry name" value="MnmG_C"/>
</dbReference>
<dbReference type="InterPro" id="IPR047001">
    <property type="entry name" value="MnmG_C_subdom"/>
</dbReference>
<dbReference type="InterPro" id="IPR044920">
    <property type="entry name" value="MnmG_C_subdom_sf"/>
</dbReference>
<dbReference type="InterPro" id="IPR040131">
    <property type="entry name" value="MnmG_N"/>
</dbReference>
<dbReference type="NCBIfam" id="TIGR00136">
    <property type="entry name" value="mnmG_gidA"/>
    <property type="match status" value="1"/>
</dbReference>
<dbReference type="PANTHER" id="PTHR11806">
    <property type="entry name" value="GLUCOSE INHIBITED DIVISION PROTEIN A"/>
    <property type="match status" value="1"/>
</dbReference>
<dbReference type="PANTHER" id="PTHR11806:SF0">
    <property type="entry name" value="PROTEIN MTO1 HOMOLOG, MITOCHONDRIAL"/>
    <property type="match status" value="1"/>
</dbReference>
<dbReference type="Pfam" id="PF01134">
    <property type="entry name" value="GIDA"/>
    <property type="match status" value="1"/>
</dbReference>
<dbReference type="Pfam" id="PF21680">
    <property type="entry name" value="GIDA_C_1st"/>
    <property type="match status" value="1"/>
</dbReference>
<dbReference type="Pfam" id="PF13932">
    <property type="entry name" value="SAM_GIDA_C"/>
    <property type="match status" value="1"/>
</dbReference>
<dbReference type="PRINTS" id="PR00368">
    <property type="entry name" value="FADPNR"/>
</dbReference>
<dbReference type="PRINTS" id="PR00411">
    <property type="entry name" value="PNDRDTASEI"/>
</dbReference>
<dbReference type="SMART" id="SM01228">
    <property type="entry name" value="GIDA_assoc_3"/>
    <property type="match status" value="1"/>
</dbReference>
<dbReference type="SUPFAM" id="SSF51905">
    <property type="entry name" value="FAD/NAD(P)-binding domain"/>
    <property type="match status" value="1"/>
</dbReference>
<dbReference type="PROSITE" id="PS01280">
    <property type="entry name" value="GIDA_1"/>
    <property type="match status" value="1"/>
</dbReference>
<dbReference type="PROSITE" id="PS01281">
    <property type="entry name" value="GIDA_2"/>
    <property type="match status" value="1"/>
</dbReference>
<name>MNMG_DESPS</name>
<comment type="function">
    <text evidence="1">NAD-binding protein involved in the addition of a carboxymethylaminomethyl (cmnm) group at the wobble position (U34) of certain tRNAs, forming tRNA-cmnm(5)s(2)U34.</text>
</comment>
<comment type="cofactor">
    <cofactor evidence="1">
        <name>FAD</name>
        <dbReference type="ChEBI" id="CHEBI:57692"/>
    </cofactor>
</comment>
<comment type="subunit">
    <text evidence="1">Homodimer. Heterotetramer of two MnmE and two MnmG subunits.</text>
</comment>
<comment type="subcellular location">
    <subcellularLocation>
        <location evidence="1">Cytoplasm</location>
    </subcellularLocation>
</comment>
<comment type="similarity">
    <text evidence="1">Belongs to the MnmG family.</text>
</comment>
<accession>Q6APZ2</accession>